<sequence length="352" mass="39748">MEIDILSLFPDYFASPLQATILGRAIKQGALSVRSRDIREFGLGKWKQVDDSPYNGEGMLLMAEPVVQAIRSIRRKKSKVIYLSPQGQLLSAKKSRELASCSHLVLLCGHYEGIDERALTAEVDEEISIGDYVLTNGCAAALVLVDALARFIPGVLGNQESAEYDSLENGLLEGPQYTRPRVFEGESVPEVLLCGDHQKIADWRKQVSLERTRERRPDLYLQYFYGNSACLSTQEDLPRIEVVSPKTFSVVLEVQDLRKAKKFYSRMFGKECWDGDKLFLLGKTSLYLQQTKETRGPTTVFIELETDHDFVRFLKRWEILGGELGEQGTGGFPLRQVFDLDGHIWVVSCVQK</sequence>
<reference key="1">
    <citation type="journal article" date="1998" name="Science">
        <title>Genome sequence of an obligate intracellular pathogen of humans: Chlamydia trachomatis.</title>
        <authorList>
            <person name="Stephens R.S."/>
            <person name="Kalman S."/>
            <person name="Lammel C.J."/>
            <person name="Fan J."/>
            <person name="Marathe R."/>
            <person name="Aravind L."/>
            <person name="Mitchell W.P."/>
            <person name="Olinger L."/>
            <person name="Tatusov R.L."/>
            <person name="Zhao Q."/>
            <person name="Koonin E.V."/>
            <person name="Davis R.W."/>
        </authorList>
    </citation>
    <scope>NUCLEOTIDE SEQUENCE [LARGE SCALE GENOMIC DNA]</scope>
    <source>
        <strain>ATCC VR-885 / DSM 19411 / UW-3/Cx</strain>
    </source>
</reference>
<accession>O84030</accession>
<gene>
    <name type="primary">trmD</name>
    <name type="ordered locus">CT_027</name>
</gene>
<keyword id="KW-0963">Cytoplasm</keyword>
<keyword id="KW-0489">Methyltransferase</keyword>
<keyword id="KW-1185">Reference proteome</keyword>
<keyword id="KW-0949">S-adenosyl-L-methionine</keyword>
<keyword id="KW-0808">Transferase</keyword>
<keyword id="KW-0819">tRNA processing</keyword>
<comment type="function">
    <text evidence="1">Specifically methylates guanosine-37 in various tRNAs.</text>
</comment>
<comment type="catalytic activity">
    <reaction>
        <text>guanosine(37) in tRNA + S-adenosyl-L-methionine = N(1)-methylguanosine(37) in tRNA + S-adenosyl-L-homocysteine + H(+)</text>
        <dbReference type="Rhea" id="RHEA:36899"/>
        <dbReference type="Rhea" id="RHEA-COMP:10145"/>
        <dbReference type="Rhea" id="RHEA-COMP:10147"/>
        <dbReference type="ChEBI" id="CHEBI:15378"/>
        <dbReference type="ChEBI" id="CHEBI:57856"/>
        <dbReference type="ChEBI" id="CHEBI:59789"/>
        <dbReference type="ChEBI" id="CHEBI:73542"/>
        <dbReference type="ChEBI" id="CHEBI:74269"/>
        <dbReference type="EC" id="2.1.1.228"/>
    </reaction>
</comment>
<comment type="subunit">
    <text evidence="1">Homodimer.</text>
</comment>
<comment type="subcellular location">
    <subcellularLocation>
        <location evidence="2">Cytoplasm</location>
    </subcellularLocation>
</comment>
<comment type="similarity">
    <text evidence="2">Belongs to the RNA methyltransferase TrmD family.</text>
</comment>
<protein>
    <recommendedName>
        <fullName>tRNA (guanine-N(1)-)-methyltransferase</fullName>
        <ecNumber>2.1.1.228</ecNumber>
    </recommendedName>
    <alternativeName>
        <fullName>M1G-methyltransferase</fullName>
    </alternativeName>
    <alternativeName>
        <fullName>tRNA [GM37] methyltransferase</fullName>
    </alternativeName>
</protein>
<proteinExistence type="inferred from homology"/>
<organism>
    <name type="scientific">Chlamydia trachomatis serovar D (strain ATCC VR-885 / DSM 19411 / UW-3/Cx)</name>
    <dbReference type="NCBI Taxonomy" id="272561"/>
    <lineage>
        <taxon>Bacteria</taxon>
        <taxon>Pseudomonadati</taxon>
        <taxon>Chlamydiota</taxon>
        <taxon>Chlamydiia</taxon>
        <taxon>Chlamydiales</taxon>
        <taxon>Chlamydiaceae</taxon>
        <taxon>Chlamydia/Chlamydophila group</taxon>
        <taxon>Chlamydia</taxon>
    </lineage>
</organism>
<name>TRMD_CHLTR</name>
<dbReference type="EC" id="2.1.1.228"/>
<dbReference type="EMBL" id="AE001273">
    <property type="protein sequence ID" value="AAC67617.1"/>
    <property type="molecule type" value="Genomic_DNA"/>
</dbReference>
<dbReference type="PIR" id="F71566">
    <property type="entry name" value="F71566"/>
</dbReference>
<dbReference type="RefSeq" id="NP_219529.1">
    <property type="nucleotide sequence ID" value="NC_000117.1"/>
</dbReference>
<dbReference type="RefSeq" id="WP_009871374.1">
    <property type="nucleotide sequence ID" value="NC_000117.1"/>
</dbReference>
<dbReference type="SMR" id="O84030"/>
<dbReference type="FunCoup" id="O84030">
    <property type="interactions" value="222"/>
</dbReference>
<dbReference type="STRING" id="272561.CT_027"/>
<dbReference type="EnsemblBacteria" id="AAC67617">
    <property type="protein sequence ID" value="AAC67617"/>
    <property type="gene ID" value="CT_027"/>
</dbReference>
<dbReference type="GeneID" id="884073"/>
<dbReference type="KEGG" id="ctr:CT_027"/>
<dbReference type="PATRIC" id="fig|272561.5.peg.32"/>
<dbReference type="HOGENOM" id="CLU_047363_0_2_0"/>
<dbReference type="InParanoid" id="O84030"/>
<dbReference type="OrthoDB" id="9807416at2"/>
<dbReference type="Proteomes" id="UP000000431">
    <property type="component" value="Chromosome"/>
</dbReference>
<dbReference type="GO" id="GO:0005829">
    <property type="term" value="C:cytosol"/>
    <property type="evidence" value="ECO:0000318"/>
    <property type="project" value="GO_Central"/>
</dbReference>
<dbReference type="GO" id="GO:0052906">
    <property type="term" value="F:tRNA (guanine(37)-N1)-methyltransferase activity"/>
    <property type="evidence" value="ECO:0000318"/>
    <property type="project" value="GO_Central"/>
</dbReference>
<dbReference type="GO" id="GO:0002939">
    <property type="term" value="P:tRNA N1-guanine methylation"/>
    <property type="evidence" value="ECO:0000318"/>
    <property type="project" value="GO_Central"/>
</dbReference>
<dbReference type="CDD" id="cd18080">
    <property type="entry name" value="TrmD-like"/>
    <property type="match status" value="1"/>
</dbReference>
<dbReference type="CDD" id="cd06587">
    <property type="entry name" value="VOC"/>
    <property type="match status" value="1"/>
</dbReference>
<dbReference type="FunFam" id="1.10.1270.20:FF:000004">
    <property type="entry name" value="tRNA (guanine-N(1)-)-methyltransferase"/>
    <property type="match status" value="1"/>
</dbReference>
<dbReference type="FunFam" id="3.40.1280.10:FF:000001">
    <property type="entry name" value="tRNA (guanine-N(1)-)-methyltransferase"/>
    <property type="match status" value="1"/>
</dbReference>
<dbReference type="Gene3D" id="3.40.1280.10">
    <property type="match status" value="1"/>
</dbReference>
<dbReference type="Gene3D" id="3.10.180.10">
    <property type="entry name" value="2,3-Dihydroxybiphenyl 1,2-Dioxygenase, domain 1"/>
    <property type="match status" value="1"/>
</dbReference>
<dbReference type="Gene3D" id="1.10.1270.20">
    <property type="entry name" value="tRNA(m1g37)methyltransferase, domain 2"/>
    <property type="match status" value="1"/>
</dbReference>
<dbReference type="HAMAP" id="MF_00605">
    <property type="entry name" value="TrmD"/>
    <property type="match status" value="1"/>
</dbReference>
<dbReference type="InterPro" id="IPR029028">
    <property type="entry name" value="Alpha/beta_knot_MTases"/>
</dbReference>
<dbReference type="InterPro" id="IPR029068">
    <property type="entry name" value="Glyas_Bleomycin-R_OHBP_Dase"/>
</dbReference>
<dbReference type="InterPro" id="IPR023148">
    <property type="entry name" value="tRNA_m1G_MeTrfase_C_sf"/>
</dbReference>
<dbReference type="InterPro" id="IPR002649">
    <property type="entry name" value="tRNA_m1G_MeTrfase_TrmD"/>
</dbReference>
<dbReference type="InterPro" id="IPR029026">
    <property type="entry name" value="tRNA_m1G_MTases_N"/>
</dbReference>
<dbReference type="InterPro" id="IPR016009">
    <property type="entry name" value="tRNA_MeTrfase_TRMD/TRM10"/>
</dbReference>
<dbReference type="NCBIfam" id="NF000648">
    <property type="entry name" value="PRK00026.1"/>
    <property type="match status" value="1"/>
</dbReference>
<dbReference type="NCBIfam" id="TIGR00088">
    <property type="entry name" value="trmD"/>
    <property type="match status" value="1"/>
</dbReference>
<dbReference type="PANTHER" id="PTHR46417">
    <property type="entry name" value="TRNA (GUANINE-N(1)-)-METHYLTRANSFERASE"/>
    <property type="match status" value="1"/>
</dbReference>
<dbReference type="PANTHER" id="PTHR46417:SF1">
    <property type="entry name" value="TRNA (GUANINE-N(1)-)-METHYLTRANSFERASE"/>
    <property type="match status" value="1"/>
</dbReference>
<dbReference type="Pfam" id="PF01746">
    <property type="entry name" value="tRNA_m1G_MT"/>
    <property type="match status" value="1"/>
</dbReference>
<dbReference type="SUPFAM" id="SSF75217">
    <property type="entry name" value="alpha/beta knot"/>
    <property type="match status" value="1"/>
</dbReference>
<dbReference type="SUPFAM" id="SSF54593">
    <property type="entry name" value="Glyoxalase/Bleomycin resistance protein/Dihydroxybiphenyl dioxygenase"/>
    <property type="match status" value="1"/>
</dbReference>
<evidence type="ECO:0000250" key="1"/>
<evidence type="ECO:0000305" key="2"/>
<feature type="chain" id="PRO_0000060355" description="tRNA (guanine-N(1)-)-methyltransferase">
    <location>
        <begin position="1"/>
        <end position="352"/>
    </location>
</feature>
<feature type="binding site" evidence="1">
    <location>
        <position position="109"/>
    </location>
    <ligand>
        <name>S-adenosyl-L-methionine</name>
        <dbReference type="ChEBI" id="CHEBI:59789"/>
    </ligand>
</feature>
<feature type="binding site" evidence="1">
    <location>
        <begin position="129"/>
        <end position="134"/>
    </location>
    <ligand>
        <name>S-adenosyl-L-methionine</name>
        <dbReference type="ChEBI" id="CHEBI:59789"/>
    </ligand>
</feature>